<feature type="transit peptide" description="Mitochondrion" evidence="1">
    <location>
        <begin position="1"/>
        <end position="63"/>
    </location>
</feature>
<feature type="chain" id="PRO_0000045424" description="Lon protease homolog 3, mitochondrial">
    <location>
        <begin position="64"/>
        <end position="924"/>
    </location>
</feature>
<feature type="domain" description="Lon N-terminal" evidence="3">
    <location>
        <begin position="112"/>
        <end position="325"/>
    </location>
</feature>
<feature type="domain" description="Lon proteolytic" evidence="2">
    <location>
        <begin position="738"/>
        <end position="922"/>
    </location>
</feature>
<feature type="active site" evidence="1">
    <location>
        <position position="828"/>
    </location>
</feature>
<feature type="active site" evidence="1">
    <location>
        <position position="871"/>
    </location>
</feature>
<feature type="binding site" evidence="1">
    <location>
        <begin position="447"/>
        <end position="454"/>
    </location>
    <ligand>
        <name>ATP</name>
        <dbReference type="ChEBI" id="CHEBI:30616"/>
    </ligand>
</feature>
<sequence length="924" mass="103476">MMPKRFNTSGFDTTLRLPSYYGFLHLTQSLTLNSRVFYGARHVTPPAIRIGSNPVQSLLLFRAPTQLTGWNRSSRDLLGRRVSFSDRSDGVDLLSSSPILSTNPNLDDSLTVIALPLPHKPLIPGFYMPIHVKDPKVLAALQESTRQQSPYVGAFLLKDCASTDSSSRSETEDNVVEKFKVKGKPKKKRRKELLNRIHQVGTLAQISSIQGEQVILVGRRRLIIEEMVSEDPLTVRVDHLKDKPYDKDNAVIKASYVEVISTLREVLKTNSLWRDQDIGDFSYQHLADFGAGISGANKHKNQGVLTELDVHKRLELTLELVKKQVEINKIKETDDGSSLSAKIRVRIDTKRDKIPKHVIKVMEEEFTKLEMLEENYSDFDLTYNYLHWLTVLPWGNFSYENFDVLRAKKILDEDHYGLSDVKERILEFIAVGRLRGTSQGKIICLSGPPGVGKTSIGRSIARALDRKFFRFSVGGLSDVAEIKGHCQTYVGAMPGKMVQCLKSVGTANPLILFDEIDKLGRCHTGDPASALLEVMDPEQNAKFLDHFLNVTIDLSKVLFVCTANVIEMIPGPLLDRMEVIDLSGYVTDEKMHIARDYLVKKTCRDCGIKPEHVDLSDAALLSLIENYCREAGVRNLQKQIEKIYRKVALELVRQGAVSFDVTDTKDTKSLAKTDSEVKRMKVADIMKILESATGDSTESKTKQSGLVAKTFEKVMIDESNLADYVGKPVFQEEKIYEQTPVGVVMGLAWTSMGGSTLYIETTFVEEGLGKGGLHITGQLGDVMKESAQIAHTVARRIMFEKEPENLFFANSKLHLHVPEGATPKDGPSAGCTMITSFLSLAMKKLVRKDLAMTGEVTLTGRILPIGGVKEKTIAARRSQIKTIIFPEANRRDFEELAENMKEGLDVHFVDEYEKIFDLAFNYDH</sequence>
<evidence type="ECO:0000255" key="1">
    <source>
        <dbReference type="HAMAP-Rule" id="MF_03120"/>
    </source>
</evidence>
<evidence type="ECO:0000255" key="2">
    <source>
        <dbReference type="PROSITE-ProRule" id="PRU01122"/>
    </source>
</evidence>
<evidence type="ECO:0000255" key="3">
    <source>
        <dbReference type="PROSITE-ProRule" id="PRU01123"/>
    </source>
</evidence>
<dbReference type="EC" id="3.4.21.53" evidence="1"/>
<dbReference type="EMBL" id="AC012393">
    <property type="protein sequence ID" value="AAF26080.1"/>
    <property type="molecule type" value="Genomic_DNA"/>
</dbReference>
<dbReference type="EMBL" id="CP002686">
    <property type="protein sequence ID" value="AEE74296.1"/>
    <property type="molecule type" value="Genomic_DNA"/>
</dbReference>
<dbReference type="RefSeq" id="NP_566258.1">
    <property type="nucleotide sequence ID" value="NM_111452.1"/>
</dbReference>
<dbReference type="SMR" id="Q9M9L8"/>
<dbReference type="FunCoup" id="Q9M9L8">
    <property type="interactions" value="2629"/>
</dbReference>
<dbReference type="STRING" id="3702.Q9M9L8"/>
<dbReference type="MEROPS" id="S16.A03"/>
<dbReference type="GlyGen" id="Q9M9L8">
    <property type="glycosylation" value="1 site"/>
</dbReference>
<dbReference type="iPTMnet" id="Q9M9L8"/>
<dbReference type="PaxDb" id="3702-AT3G05780.1"/>
<dbReference type="EnsemblPlants" id="AT3G05780.1">
    <property type="protein sequence ID" value="AT3G05780.1"/>
    <property type="gene ID" value="AT3G05780"/>
</dbReference>
<dbReference type="GeneID" id="819747"/>
<dbReference type="Gramene" id="AT3G05780.1">
    <property type="protein sequence ID" value="AT3G05780.1"/>
    <property type="gene ID" value="AT3G05780"/>
</dbReference>
<dbReference type="KEGG" id="ath:AT3G05780"/>
<dbReference type="Araport" id="AT3G05780"/>
<dbReference type="TAIR" id="AT3G05780">
    <property type="gene designation" value="LON3"/>
</dbReference>
<dbReference type="eggNOG" id="KOG2004">
    <property type="taxonomic scope" value="Eukaryota"/>
</dbReference>
<dbReference type="HOGENOM" id="CLU_004109_1_0_1"/>
<dbReference type="InParanoid" id="Q9M9L8"/>
<dbReference type="OMA" id="MFEKEPE"/>
<dbReference type="PhylomeDB" id="Q9M9L8"/>
<dbReference type="PRO" id="PR:Q9M9L8"/>
<dbReference type="Proteomes" id="UP000006548">
    <property type="component" value="Chromosome 3"/>
</dbReference>
<dbReference type="ExpressionAtlas" id="Q9M9L8">
    <property type="expression patterns" value="baseline and differential"/>
</dbReference>
<dbReference type="GO" id="GO:0005759">
    <property type="term" value="C:mitochondrial matrix"/>
    <property type="evidence" value="ECO:0007669"/>
    <property type="project" value="UniProtKB-SubCell"/>
</dbReference>
<dbReference type="GO" id="GO:0005739">
    <property type="term" value="C:mitochondrion"/>
    <property type="evidence" value="ECO:0007005"/>
    <property type="project" value="TAIR"/>
</dbReference>
<dbReference type="GO" id="GO:0005524">
    <property type="term" value="F:ATP binding"/>
    <property type="evidence" value="ECO:0007669"/>
    <property type="project" value="UniProtKB-UniRule"/>
</dbReference>
<dbReference type="GO" id="GO:0016887">
    <property type="term" value="F:ATP hydrolysis activity"/>
    <property type="evidence" value="ECO:0007669"/>
    <property type="project" value="UniProtKB-UniRule"/>
</dbReference>
<dbReference type="GO" id="GO:0004176">
    <property type="term" value="F:ATP-dependent peptidase activity"/>
    <property type="evidence" value="ECO:0007669"/>
    <property type="project" value="UniProtKB-UniRule"/>
</dbReference>
<dbReference type="GO" id="GO:0043565">
    <property type="term" value="F:sequence-specific DNA binding"/>
    <property type="evidence" value="ECO:0007669"/>
    <property type="project" value="UniProtKB-UniRule"/>
</dbReference>
<dbReference type="GO" id="GO:0004252">
    <property type="term" value="F:serine-type endopeptidase activity"/>
    <property type="evidence" value="ECO:0007669"/>
    <property type="project" value="UniProtKB-UniRule"/>
</dbReference>
<dbReference type="GO" id="GO:0034599">
    <property type="term" value="P:cellular response to oxidative stress"/>
    <property type="evidence" value="ECO:0007669"/>
    <property type="project" value="UniProtKB-UniRule"/>
</dbReference>
<dbReference type="GO" id="GO:0051131">
    <property type="term" value="P:chaperone-mediated protein complex assembly"/>
    <property type="evidence" value="ECO:0007669"/>
    <property type="project" value="UniProtKB-UniRule"/>
</dbReference>
<dbReference type="GO" id="GO:0070407">
    <property type="term" value="P:oxidation-dependent protein catabolic process"/>
    <property type="evidence" value="ECO:0007669"/>
    <property type="project" value="UniProtKB-UniRule"/>
</dbReference>
<dbReference type="GO" id="GO:0006515">
    <property type="term" value="P:protein quality control for misfolded or incompletely synthesized proteins"/>
    <property type="evidence" value="ECO:0007669"/>
    <property type="project" value="UniProtKB-UniRule"/>
</dbReference>
<dbReference type="CDD" id="cd19500">
    <property type="entry name" value="RecA-like_Lon"/>
    <property type="match status" value="1"/>
</dbReference>
<dbReference type="FunFam" id="1.20.5.5270:FF:000002">
    <property type="entry name" value="Lon protease homolog"/>
    <property type="match status" value="1"/>
</dbReference>
<dbReference type="FunFam" id="3.40.50.300:FF:000021">
    <property type="entry name" value="Lon protease homolog"/>
    <property type="match status" value="1"/>
</dbReference>
<dbReference type="FunFam" id="1.10.8.60:FF:000080">
    <property type="entry name" value="Lon protease homolog, mitochondrial"/>
    <property type="match status" value="1"/>
</dbReference>
<dbReference type="FunFam" id="2.30.130.40:FF:000007">
    <property type="entry name" value="Lon protease homolog, mitochondrial"/>
    <property type="match status" value="1"/>
</dbReference>
<dbReference type="FunFam" id="3.30.230.10:FF:000015">
    <property type="entry name" value="Lon protease homolog, mitochondrial"/>
    <property type="match status" value="1"/>
</dbReference>
<dbReference type="Gene3D" id="1.10.8.60">
    <property type="match status" value="1"/>
</dbReference>
<dbReference type="Gene3D" id="1.20.5.5270">
    <property type="match status" value="1"/>
</dbReference>
<dbReference type="Gene3D" id="1.20.58.1480">
    <property type="match status" value="1"/>
</dbReference>
<dbReference type="Gene3D" id="3.30.230.10">
    <property type="match status" value="1"/>
</dbReference>
<dbReference type="Gene3D" id="2.30.130.40">
    <property type="entry name" value="LON domain-like"/>
    <property type="match status" value="1"/>
</dbReference>
<dbReference type="Gene3D" id="3.40.50.300">
    <property type="entry name" value="P-loop containing nucleotide triphosphate hydrolases"/>
    <property type="match status" value="1"/>
</dbReference>
<dbReference type="HAMAP" id="MF_03120">
    <property type="entry name" value="lonm_euk"/>
    <property type="match status" value="1"/>
</dbReference>
<dbReference type="InterPro" id="IPR003593">
    <property type="entry name" value="AAA+_ATPase"/>
</dbReference>
<dbReference type="InterPro" id="IPR003959">
    <property type="entry name" value="ATPase_AAA_core"/>
</dbReference>
<dbReference type="InterPro" id="IPR004815">
    <property type="entry name" value="Lon_bac/euk-typ"/>
</dbReference>
<dbReference type="InterPro" id="IPR054594">
    <property type="entry name" value="Lon_lid"/>
</dbReference>
<dbReference type="InterPro" id="IPR008269">
    <property type="entry name" value="Lon_proteolytic"/>
</dbReference>
<dbReference type="InterPro" id="IPR027065">
    <property type="entry name" value="Lon_Prtase"/>
</dbReference>
<dbReference type="InterPro" id="IPR003111">
    <property type="entry name" value="Lon_prtase_N"/>
</dbReference>
<dbReference type="InterPro" id="IPR046336">
    <property type="entry name" value="Lon_prtase_N_sf"/>
</dbReference>
<dbReference type="InterPro" id="IPR027503">
    <property type="entry name" value="Lonm_euk"/>
</dbReference>
<dbReference type="InterPro" id="IPR027417">
    <property type="entry name" value="P-loop_NTPase"/>
</dbReference>
<dbReference type="InterPro" id="IPR008268">
    <property type="entry name" value="Peptidase_S16_AS"/>
</dbReference>
<dbReference type="InterPro" id="IPR015947">
    <property type="entry name" value="PUA-like_sf"/>
</dbReference>
<dbReference type="InterPro" id="IPR020568">
    <property type="entry name" value="Ribosomal_Su5_D2-typ_SF"/>
</dbReference>
<dbReference type="InterPro" id="IPR014721">
    <property type="entry name" value="Ribsml_uS5_D2-typ_fold_subgr"/>
</dbReference>
<dbReference type="NCBIfam" id="TIGR00763">
    <property type="entry name" value="lon"/>
    <property type="match status" value="1"/>
</dbReference>
<dbReference type="PANTHER" id="PTHR43718">
    <property type="entry name" value="LON PROTEASE"/>
    <property type="match status" value="1"/>
</dbReference>
<dbReference type="PANTHER" id="PTHR43718:SF14">
    <property type="entry name" value="LON PROTEASE HOMOLOG 3, MITOCHONDRIAL-RELATED"/>
    <property type="match status" value="1"/>
</dbReference>
<dbReference type="Pfam" id="PF00004">
    <property type="entry name" value="AAA"/>
    <property type="match status" value="1"/>
</dbReference>
<dbReference type="Pfam" id="PF05362">
    <property type="entry name" value="Lon_C"/>
    <property type="match status" value="1"/>
</dbReference>
<dbReference type="Pfam" id="PF22667">
    <property type="entry name" value="Lon_lid"/>
    <property type="match status" value="1"/>
</dbReference>
<dbReference type="Pfam" id="PF02190">
    <property type="entry name" value="LON_substr_bdg"/>
    <property type="match status" value="1"/>
</dbReference>
<dbReference type="PIRSF" id="PIRSF001174">
    <property type="entry name" value="Lon_proteas"/>
    <property type="match status" value="1"/>
</dbReference>
<dbReference type="PRINTS" id="PR00830">
    <property type="entry name" value="ENDOLAPTASE"/>
</dbReference>
<dbReference type="SMART" id="SM00382">
    <property type="entry name" value="AAA"/>
    <property type="match status" value="1"/>
</dbReference>
<dbReference type="SMART" id="SM00464">
    <property type="entry name" value="LON"/>
    <property type="match status" value="1"/>
</dbReference>
<dbReference type="SUPFAM" id="SSF52540">
    <property type="entry name" value="P-loop containing nucleoside triphosphate hydrolases"/>
    <property type="match status" value="1"/>
</dbReference>
<dbReference type="SUPFAM" id="SSF88697">
    <property type="entry name" value="PUA domain-like"/>
    <property type="match status" value="1"/>
</dbReference>
<dbReference type="SUPFAM" id="SSF54211">
    <property type="entry name" value="Ribosomal protein S5 domain 2-like"/>
    <property type="match status" value="1"/>
</dbReference>
<dbReference type="PROSITE" id="PS51787">
    <property type="entry name" value="LON_N"/>
    <property type="match status" value="1"/>
</dbReference>
<dbReference type="PROSITE" id="PS51786">
    <property type="entry name" value="LON_PROTEOLYTIC"/>
    <property type="match status" value="1"/>
</dbReference>
<dbReference type="PROSITE" id="PS01046">
    <property type="entry name" value="LON_SER"/>
    <property type="match status" value="1"/>
</dbReference>
<gene>
    <name type="primary">LON3</name>
    <name type="ordered locus">At3g05780</name>
    <name type="ORF">F10A16.7</name>
</gene>
<name>LONM3_ARATH</name>
<proteinExistence type="inferred from homology"/>
<keyword id="KW-0067">ATP-binding</keyword>
<keyword id="KW-0238">DNA-binding</keyword>
<keyword id="KW-0378">Hydrolase</keyword>
<keyword id="KW-0496">Mitochondrion</keyword>
<keyword id="KW-0547">Nucleotide-binding</keyword>
<keyword id="KW-0645">Protease</keyword>
<keyword id="KW-1185">Reference proteome</keyword>
<keyword id="KW-0720">Serine protease</keyword>
<keyword id="KW-0809">Transit peptide</keyword>
<protein>
    <recommendedName>
        <fullName>Lon protease homolog 3, mitochondrial</fullName>
        <ecNumber evidence="1">3.4.21.53</ecNumber>
    </recommendedName>
</protein>
<organism>
    <name type="scientific">Arabidopsis thaliana</name>
    <name type="common">Mouse-ear cress</name>
    <dbReference type="NCBI Taxonomy" id="3702"/>
    <lineage>
        <taxon>Eukaryota</taxon>
        <taxon>Viridiplantae</taxon>
        <taxon>Streptophyta</taxon>
        <taxon>Embryophyta</taxon>
        <taxon>Tracheophyta</taxon>
        <taxon>Spermatophyta</taxon>
        <taxon>Magnoliopsida</taxon>
        <taxon>eudicotyledons</taxon>
        <taxon>Gunneridae</taxon>
        <taxon>Pentapetalae</taxon>
        <taxon>rosids</taxon>
        <taxon>malvids</taxon>
        <taxon>Brassicales</taxon>
        <taxon>Brassicaceae</taxon>
        <taxon>Camelineae</taxon>
        <taxon>Arabidopsis</taxon>
    </lineage>
</organism>
<reference key="1">
    <citation type="journal article" date="2000" name="Nature">
        <title>Sequence and analysis of chromosome 3 of the plant Arabidopsis thaliana.</title>
        <authorList>
            <person name="Salanoubat M."/>
            <person name="Lemcke K."/>
            <person name="Rieger M."/>
            <person name="Ansorge W."/>
            <person name="Unseld M."/>
            <person name="Fartmann B."/>
            <person name="Valle G."/>
            <person name="Bloecker H."/>
            <person name="Perez-Alonso M."/>
            <person name="Obermaier B."/>
            <person name="Delseny M."/>
            <person name="Boutry M."/>
            <person name="Grivell L.A."/>
            <person name="Mache R."/>
            <person name="Puigdomenech P."/>
            <person name="De Simone V."/>
            <person name="Choisne N."/>
            <person name="Artiguenave F."/>
            <person name="Robert C."/>
            <person name="Brottier P."/>
            <person name="Wincker P."/>
            <person name="Cattolico L."/>
            <person name="Weissenbach J."/>
            <person name="Saurin W."/>
            <person name="Quetier F."/>
            <person name="Schaefer M."/>
            <person name="Mueller-Auer S."/>
            <person name="Gabel C."/>
            <person name="Fuchs M."/>
            <person name="Benes V."/>
            <person name="Wurmbach E."/>
            <person name="Drzonek H."/>
            <person name="Erfle H."/>
            <person name="Jordan N."/>
            <person name="Bangert S."/>
            <person name="Wiedelmann R."/>
            <person name="Kranz H."/>
            <person name="Voss H."/>
            <person name="Holland R."/>
            <person name="Brandt P."/>
            <person name="Nyakatura G."/>
            <person name="Vezzi A."/>
            <person name="D'Angelo M."/>
            <person name="Pallavicini A."/>
            <person name="Toppo S."/>
            <person name="Simionati B."/>
            <person name="Conrad A."/>
            <person name="Hornischer K."/>
            <person name="Kauer G."/>
            <person name="Loehnert T.-H."/>
            <person name="Nordsiek G."/>
            <person name="Reichelt J."/>
            <person name="Scharfe M."/>
            <person name="Schoen O."/>
            <person name="Bargues M."/>
            <person name="Terol J."/>
            <person name="Climent J."/>
            <person name="Navarro P."/>
            <person name="Collado C."/>
            <person name="Perez-Perez A."/>
            <person name="Ottenwaelder B."/>
            <person name="Duchemin D."/>
            <person name="Cooke R."/>
            <person name="Laudie M."/>
            <person name="Berger-Llauro C."/>
            <person name="Purnelle B."/>
            <person name="Masuy D."/>
            <person name="de Haan M."/>
            <person name="Maarse A.C."/>
            <person name="Alcaraz J.-P."/>
            <person name="Cottet A."/>
            <person name="Casacuberta E."/>
            <person name="Monfort A."/>
            <person name="Argiriou A."/>
            <person name="Flores M."/>
            <person name="Liguori R."/>
            <person name="Vitale D."/>
            <person name="Mannhaupt G."/>
            <person name="Haase D."/>
            <person name="Schoof H."/>
            <person name="Rudd S."/>
            <person name="Zaccaria P."/>
            <person name="Mewes H.-W."/>
            <person name="Mayer K.F.X."/>
            <person name="Kaul S."/>
            <person name="Town C.D."/>
            <person name="Koo H.L."/>
            <person name="Tallon L.J."/>
            <person name="Jenkins J."/>
            <person name="Rooney T."/>
            <person name="Rizzo M."/>
            <person name="Walts A."/>
            <person name="Utterback T."/>
            <person name="Fujii C.Y."/>
            <person name="Shea T.P."/>
            <person name="Creasy T.H."/>
            <person name="Haas B."/>
            <person name="Maiti R."/>
            <person name="Wu D."/>
            <person name="Peterson J."/>
            <person name="Van Aken S."/>
            <person name="Pai G."/>
            <person name="Militscher J."/>
            <person name="Sellers P."/>
            <person name="Gill J.E."/>
            <person name="Feldblyum T.V."/>
            <person name="Preuss D."/>
            <person name="Lin X."/>
            <person name="Nierman W.C."/>
            <person name="Salzberg S.L."/>
            <person name="White O."/>
            <person name="Venter J.C."/>
            <person name="Fraser C.M."/>
            <person name="Kaneko T."/>
            <person name="Nakamura Y."/>
            <person name="Sato S."/>
            <person name="Kato T."/>
            <person name="Asamizu E."/>
            <person name="Sasamoto S."/>
            <person name="Kimura T."/>
            <person name="Idesawa K."/>
            <person name="Kawashima K."/>
            <person name="Kishida Y."/>
            <person name="Kiyokawa C."/>
            <person name="Kohara M."/>
            <person name="Matsumoto M."/>
            <person name="Matsuno A."/>
            <person name="Muraki A."/>
            <person name="Nakayama S."/>
            <person name="Nakazaki N."/>
            <person name="Shinpo S."/>
            <person name="Takeuchi C."/>
            <person name="Wada T."/>
            <person name="Watanabe A."/>
            <person name="Yamada M."/>
            <person name="Yasuda M."/>
            <person name="Tabata S."/>
        </authorList>
    </citation>
    <scope>NUCLEOTIDE SEQUENCE [LARGE SCALE GENOMIC DNA]</scope>
    <source>
        <strain>cv. Columbia</strain>
    </source>
</reference>
<reference key="2">
    <citation type="journal article" date="2017" name="Plant J.">
        <title>Araport11: a complete reannotation of the Arabidopsis thaliana reference genome.</title>
        <authorList>
            <person name="Cheng C.Y."/>
            <person name="Krishnakumar V."/>
            <person name="Chan A.P."/>
            <person name="Thibaud-Nissen F."/>
            <person name="Schobel S."/>
            <person name="Town C.D."/>
        </authorList>
    </citation>
    <scope>GENOME REANNOTATION</scope>
    <source>
        <strain>cv. Columbia</strain>
    </source>
</reference>
<accession>Q9M9L8</accession>
<comment type="function">
    <text evidence="1">ATP-dependent serine protease that mediates the selective degradation of misfolded, unassembled or oxidatively damaged polypeptides as well as certain short-lived regulatory proteins in the mitochondrial matrix. May also have a chaperone function in the assembly of inner membrane protein complexes. Participates in the regulation of mitochondrial gene expression and in the maintenance of the integrity of the mitochondrial genome. Binds to mitochondrial DNA in a site-specific manner.</text>
</comment>
<comment type="catalytic activity">
    <reaction evidence="1">
        <text>Hydrolysis of proteins in presence of ATP.</text>
        <dbReference type="EC" id="3.4.21.53"/>
    </reaction>
</comment>
<comment type="subunit">
    <text evidence="1">Homohexamer or homoheptamer. Organized in a ring with a central cavity.</text>
</comment>
<comment type="subcellular location">
    <subcellularLocation>
        <location evidence="1">Mitochondrion matrix</location>
    </subcellularLocation>
</comment>
<comment type="similarity">
    <text evidence="1">Belongs to the peptidase S16 family.</text>
</comment>